<organism>
    <name type="scientific">Saccharomyces cerevisiae (strain ATCC 204508 / S288c)</name>
    <name type="common">Baker's yeast</name>
    <dbReference type="NCBI Taxonomy" id="559292"/>
    <lineage>
        <taxon>Eukaryota</taxon>
        <taxon>Fungi</taxon>
        <taxon>Dikarya</taxon>
        <taxon>Ascomycota</taxon>
        <taxon>Saccharomycotina</taxon>
        <taxon>Saccharomycetes</taxon>
        <taxon>Saccharomycetales</taxon>
        <taxon>Saccharomycetaceae</taxon>
        <taxon>Saccharomyces</taxon>
    </lineage>
</organism>
<name>YM12B_YEAST</name>
<reference key="1">
    <citation type="journal article" date="1997" name="Nature">
        <title>The nucleotide sequence of Saccharomyces cerevisiae chromosome XIII.</title>
        <authorList>
            <person name="Bowman S."/>
            <person name="Churcher C.M."/>
            <person name="Badcock K."/>
            <person name="Brown D."/>
            <person name="Chillingworth T."/>
            <person name="Connor R."/>
            <person name="Dedman K."/>
            <person name="Devlin K."/>
            <person name="Gentles S."/>
            <person name="Hamlin N."/>
            <person name="Hunt S."/>
            <person name="Jagels K."/>
            <person name="Lye G."/>
            <person name="Moule S."/>
            <person name="Odell C."/>
            <person name="Pearson D."/>
            <person name="Rajandream M.A."/>
            <person name="Rice P."/>
            <person name="Skelton J."/>
            <person name="Walsh S.V."/>
            <person name="Whitehead S."/>
            <person name="Barrell B.G."/>
        </authorList>
    </citation>
    <scope>NUCLEOTIDE SEQUENCE [LARGE SCALE GENOMIC DNA]</scope>
    <source>
        <strain>ATCC 204508 / S288c</strain>
    </source>
</reference>
<reference key="2">
    <citation type="journal article" date="2014" name="G3 (Bethesda)">
        <title>The reference genome sequence of Saccharomyces cerevisiae: Then and now.</title>
        <authorList>
            <person name="Engel S.R."/>
            <person name="Dietrich F.S."/>
            <person name="Fisk D.G."/>
            <person name="Binkley G."/>
            <person name="Balakrishnan R."/>
            <person name="Costanzo M.C."/>
            <person name="Dwight S.S."/>
            <person name="Hitz B.C."/>
            <person name="Karra K."/>
            <person name="Nash R.S."/>
            <person name="Weng S."/>
            <person name="Wong E.D."/>
            <person name="Lloyd P."/>
            <person name="Skrzypek M.S."/>
            <person name="Miyasato S.R."/>
            <person name="Simison M."/>
            <person name="Cherry J.M."/>
        </authorList>
    </citation>
    <scope>GENOME REANNOTATION</scope>
    <source>
        <strain>ATCC 204508 / S288c</strain>
    </source>
</reference>
<reference key="3">
    <citation type="journal article" date="1998" name="Genome Res.">
        <title>Transposable elements and genome organization: a comprehensive survey of retrotransposons revealed by the complete Saccharomyces cerevisiae genome sequence.</title>
        <authorList>
            <person name="Kim J.M."/>
            <person name="Vanguri S."/>
            <person name="Boeke J.D."/>
            <person name="Gabriel A."/>
            <person name="Voytas D.F."/>
        </authorList>
    </citation>
    <scope>NOMENCLATURE</scope>
</reference>
<reference key="4">
    <citation type="journal article" date="2005" name="Cytogenet. Genome Res.">
        <title>Happy together: the life and times of Ty retrotransposons and their hosts.</title>
        <authorList>
            <person name="Lesage P."/>
            <person name="Todeschini A.L."/>
        </authorList>
    </citation>
    <scope>REVIEW</scope>
</reference>
<reference key="5">
    <citation type="journal article" date="2005" name="Cytogenet. Genome Res.">
        <title>Reverse transcriptase and integrase of the Saccharomyces cerevisiae Ty1 element.</title>
        <authorList>
            <person name="Wilhelm F.-X."/>
            <person name="Wilhelm M."/>
            <person name="Gabriel A."/>
        </authorList>
    </citation>
    <scope>REVIEW</scope>
    <scope>DOMAINS</scope>
</reference>
<dbReference type="EC" id="3.4.23.-"/>
<dbReference type="EC" id="2.7.7.49"/>
<dbReference type="EC" id="2.7.7.7"/>
<dbReference type="EC" id="3.1.26.4"/>
<dbReference type="EMBL" id="Z48430">
    <property type="protein sequence ID" value="CAA88330.1"/>
    <property type="status" value="ALT_SEQ"/>
    <property type="molecule type" value="Genomic_DNA"/>
</dbReference>
<dbReference type="EMBL" id="BK006946">
    <property type="protein sequence ID" value="DAA09859.1"/>
    <property type="molecule type" value="Genomic_DNA"/>
</dbReference>
<dbReference type="PIR" id="S52481">
    <property type="entry name" value="S52481"/>
</dbReference>
<dbReference type="RefSeq" id="NP_013672.1">
    <molecule id="Q03434-1"/>
    <property type="nucleotide sequence ID" value="NM_001182397.2"/>
</dbReference>
<dbReference type="SMR" id="Q03434"/>
<dbReference type="BioGRID" id="35131">
    <property type="interactions" value="10"/>
</dbReference>
<dbReference type="FunCoup" id="Q03434">
    <property type="interactions" value="52"/>
</dbReference>
<dbReference type="IntAct" id="Q03434">
    <property type="interactions" value="6"/>
</dbReference>
<dbReference type="GlyGen" id="Q03434">
    <property type="glycosylation" value="3 sites"/>
</dbReference>
<dbReference type="PaxDb" id="4932-YML039W"/>
<dbReference type="PeptideAtlas" id="Q03434"/>
<dbReference type="GeneID" id="854969"/>
<dbReference type="KEGG" id="sce:YML039W"/>
<dbReference type="AGR" id="SGD:S000004503"/>
<dbReference type="SGD" id="S000004503">
    <property type="gene designation" value="YML039W"/>
</dbReference>
<dbReference type="VEuPathDB" id="FungiDB:YML039W"/>
<dbReference type="eggNOG" id="KOG0017">
    <property type="taxonomic scope" value="Eukaryota"/>
</dbReference>
<dbReference type="HOGENOM" id="CLU_244151_0_0_1"/>
<dbReference type="InParanoid" id="Q03434"/>
<dbReference type="OrthoDB" id="5423336at2759"/>
<dbReference type="Proteomes" id="UP000002311">
    <property type="component" value="Chromosome XIII"/>
</dbReference>
<dbReference type="RNAct" id="Q03434">
    <property type="molecule type" value="protein"/>
</dbReference>
<dbReference type="GO" id="GO:0005737">
    <property type="term" value="C:cytoplasm"/>
    <property type="evidence" value="ECO:0007669"/>
    <property type="project" value="UniProtKB-SubCell"/>
</dbReference>
<dbReference type="GO" id="GO:0005634">
    <property type="term" value="C:nucleus"/>
    <property type="evidence" value="ECO:0000314"/>
    <property type="project" value="SGD"/>
</dbReference>
<dbReference type="GO" id="GO:0004190">
    <property type="term" value="F:aspartic-type endopeptidase activity"/>
    <property type="evidence" value="ECO:0007669"/>
    <property type="project" value="UniProtKB-KW"/>
</dbReference>
<dbReference type="GO" id="GO:0005524">
    <property type="term" value="F:ATP binding"/>
    <property type="evidence" value="ECO:0007669"/>
    <property type="project" value="UniProtKB-KW"/>
</dbReference>
<dbReference type="GO" id="GO:0003677">
    <property type="term" value="F:DNA binding"/>
    <property type="evidence" value="ECO:0007669"/>
    <property type="project" value="UniProtKB-KW"/>
</dbReference>
<dbReference type="GO" id="GO:0003887">
    <property type="term" value="F:DNA-directed DNA polymerase activity"/>
    <property type="evidence" value="ECO:0007669"/>
    <property type="project" value="UniProtKB-KW"/>
</dbReference>
<dbReference type="GO" id="GO:0003723">
    <property type="term" value="F:RNA binding"/>
    <property type="evidence" value="ECO:0007669"/>
    <property type="project" value="UniProtKB-KW"/>
</dbReference>
<dbReference type="GO" id="GO:0003964">
    <property type="term" value="F:RNA-directed DNA polymerase activity"/>
    <property type="evidence" value="ECO:0007669"/>
    <property type="project" value="UniProtKB-KW"/>
</dbReference>
<dbReference type="GO" id="GO:0004523">
    <property type="term" value="F:RNA-DNA hybrid ribonuclease activity"/>
    <property type="evidence" value="ECO:0007669"/>
    <property type="project" value="UniProtKB-EC"/>
</dbReference>
<dbReference type="GO" id="GO:0008270">
    <property type="term" value="F:zinc ion binding"/>
    <property type="evidence" value="ECO:0007669"/>
    <property type="project" value="UniProtKB-KW"/>
</dbReference>
<dbReference type="GO" id="GO:0015074">
    <property type="term" value="P:DNA integration"/>
    <property type="evidence" value="ECO:0007669"/>
    <property type="project" value="UniProtKB-KW"/>
</dbReference>
<dbReference type="GO" id="GO:0006310">
    <property type="term" value="P:DNA recombination"/>
    <property type="evidence" value="ECO:0007669"/>
    <property type="project" value="UniProtKB-KW"/>
</dbReference>
<dbReference type="GO" id="GO:0006508">
    <property type="term" value="P:proteolysis"/>
    <property type="evidence" value="ECO:0007669"/>
    <property type="project" value="UniProtKB-KW"/>
</dbReference>
<dbReference type="GO" id="GO:0032196">
    <property type="term" value="P:transposition"/>
    <property type="evidence" value="ECO:0007669"/>
    <property type="project" value="UniProtKB-KW"/>
</dbReference>
<dbReference type="GO" id="GO:0075523">
    <property type="term" value="P:viral translational frameshifting"/>
    <property type="evidence" value="ECO:0007669"/>
    <property type="project" value="UniProtKB-KW"/>
</dbReference>
<dbReference type="CDD" id="cd09272">
    <property type="entry name" value="RNase_HI_RT_Ty1"/>
    <property type="match status" value="1"/>
</dbReference>
<dbReference type="FunFam" id="3.30.420.10:FF:000050">
    <property type="entry name" value="Transposon Ty2-DR3 Gag-Pol polyprotein"/>
    <property type="match status" value="1"/>
</dbReference>
<dbReference type="Gene3D" id="3.30.420.10">
    <property type="entry name" value="Ribonuclease H-like superfamily/Ribonuclease H"/>
    <property type="match status" value="1"/>
</dbReference>
<dbReference type="InterPro" id="IPR001969">
    <property type="entry name" value="Aspartic_peptidase_AS"/>
</dbReference>
<dbReference type="InterPro" id="IPR043502">
    <property type="entry name" value="DNA/RNA_pol_sf"/>
</dbReference>
<dbReference type="InterPro" id="IPR001584">
    <property type="entry name" value="Integrase_cat-core"/>
</dbReference>
<dbReference type="InterPro" id="IPR039537">
    <property type="entry name" value="Retrotran_Ty1/copia-like"/>
</dbReference>
<dbReference type="InterPro" id="IPR012337">
    <property type="entry name" value="RNaseH-like_sf"/>
</dbReference>
<dbReference type="InterPro" id="IPR036397">
    <property type="entry name" value="RNaseH_sf"/>
</dbReference>
<dbReference type="InterPro" id="IPR013103">
    <property type="entry name" value="RVT_2"/>
</dbReference>
<dbReference type="InterPro" id="IPR015820">
    <property type="entry name" value="TYA"/>
</dbReference>
<dbReference type="PANTHER" id="PTHR42648">
    <property type="entry name" value="TRANSPOSASE, PUTATIVE-RELATED"/>
    <property type="match status" value="1"/>
</dbReference>
<dbReference type="PANTHER" id="PTHR42648:SF11">
    <property type="entry name" value="TRANSPOSON TY4-P GAG-POL POLYPROTEIN"/>
    <property type="match status" value="1"/>
</dbReference>
<dbReference type="Pfam" id="PF00665">
    <property type="entry name" value="rve"/>
    <property type="match status" value="1"/>
</dbReference>
<dbReference type="Pfam" id="PF07727">
    <property type="entry name" value="RVT_2"/>
    <property type="match status" value="1"/>
</dbReference>
<dbReference type="Pfam" id="PF01021">
    <property type="entry name" value="TYA"/>
    <property type="match status" value="1"/>
</dbReference>
<dbReference type="SUPFAM" id="SSF56672">
    <property type="entry name" value="DNA/RNA polymerases"/>
    <property type="match status" value="1"/>
</dbReference>
<dbReference type="SUPFAM" id="SSF53098">
    <property type="entry name" value="Ribonuclease H-like"/>
    <property type="match status" value="1"/>
</dbReference>
<dbReference type="PROSITE" id="PS00141">
    <property type="entry name" value="ASP_PROTEASE"/>
    <property type="match status" value="1"/>
</dbReference>
<dbReference type="PROSITE" id="PS50994">
    <property type="entry name" value="INTEGRASE"/>
    <property type="match status" value="1"/>
</dbReference>
<sequence length="1755" mass="198572">MESQQLSQHSHISHGSACASVTSKEVHTNQDPLDVSASKTEECEKASTKANSQQTTTPASSAVPENPHHASPQPASVPPPQNGPYPQQCMMTQNQANPSGWSFYGHPSMIPYTPYQMSPMYFPPGPQSQFPQYPSSVGTPLSTPSPESGNTFTDSSSADSDMTSTKKYVRPPPMLTSPNDFPNWVKTYIKFLQNSNLGGIIPTVNGKPVRQITDDELTFLYNTFQIFAPSQFLPTWVKDILSVDYTDIMKILSKSIEKMQSDTQEANDIVTLANLQYNGSTPADAFETKVTNIIDRLNNNGIHINNKVACQLIMRGLSGEYKFLRYTRHRHLNMTVAELFLDIHAIYEEQQGSRNSKPNYRRNLSDEKNDSRSYTNTTKPKVIARNPQKTNNSKSKTARAHNVSTSNNSPSTDNDSISKSTTEPIQLNNKHDLHLGQELTESTVNHTNHSDDELPGHLLLDSGASRTLIRSAHHIHSASSNPDINVVDAQKRNIPINAIGDLQFHFQDNTKTSIKVLHTPNIAYDLLSLNELAAVDITACFTKNVLERSDGTVLAPIVKYGDFYWVSKKYLLPSNISVPTINNVHTSESTRKYPYPFIHRMLAHANAQTIRYSLKNNTITYFNESDVDRSSAIDYQCPDCLIGKSTKHRHIKGSRLKYQNSYEPFQYLHTDIFGPVHNLPKSAPSYFISFTDETTKFRWVYPLHDRREDSILDVFTTILAFIKNQFQASVLVIQMDRGSEYTNRTLHKFLEKNGITPCYTTTADSRAHGVAERLNRTLLDDCRTQLQCSGLPNHLWFSAIEFSTIVRNSLASPKSKKSARQHAGLAGLDISTLLPFGQPVIVNDHNPNSKIHPRGIPGYALHPSRNSYGYIIYLPSLKKTVDTTNYVILQGKESRLDQFNYDALTFDEDLNRLTASYQSFIASNEIQQSDDLNIESDHDFQSDIELHPEQPRNVLSKAVSPTDSTPPSTHTEDSKRVSKTNIRAPREVDPNISESNILPSKKRSSTPQISNIESTGSGGMHKLNVPLLAPMSQSNTHESSHASKSKDFRHSDSYSENETNHTNVPISSTGGTNNKTVPQISDQETEKRIIHRSPSIDASPPENNSSHNIVPIKTPTTVSEQNTEESIIADLPLPDLPPESPTEFPDPFKELPPINSHQTNSSLGGIGDSNAYTTINSKKRSLEDNETEIKVSRDTWNTKNMRSLEPPRSKKRIHLIAAVKAVKSIKPIRTTLRYDEAITYNKDIKEKEKYIEAYHKEVNQLLKMKTWDTDEYYDRKEIDPKRVINSMFIFNKKRDGTHKARFVARGDIQHPDTYDSGMQSNTVHHYALMTSLSLALDNNYYITQLDISSAYLYADIKEELYIRPPPHLGMNDKLIRLKKSLYGLKQSGANWYETIKSYLIKQCGMEEVRGWSCVFKNSQVTICLFVDDMILFSKDLNANKKIITTLKKQYDTKIINLGESDNEIQYDILGLEIKYQRGKYMKLGMENSLTEKIPKLNVPLNPKGRKLSAPGQPGLYIDQDELEIDEDEYKEKVHEMQKLIGLASYVGYKFRFDLLYYINTLAQHILFPSRQVLDMTYELIQFMWDTRDKQLIWHKNKPTEPDNKLVAISDASYGNQPYYKSQIGNIYLLNGKVIGGKSTKASLTCTSTTEAEIHAISESVPLLNNLSYLIQELNKKPIIKGLLTDSRSTISIIKSTNEEKFRNRFFGTKAMRLRDEVSGNNLYVYYIETKKNIADVMTKPLPIKTFKLLTNKWIH</sequence>
<keyword id="KW-0064">Aspartyl protease</keyword>
<keyword id="KW-0067">ATP-binding</keyword>
<keyword id="KW-0963">Cytoplasm</keyword>
<keyword id="KW-0229">DNA integration</keyword>
<keyword id="KW-0233">DNA recombination</keyword>
<keyword id="KW-0238">DNA-binding</keyword>
<keyword id="KW-0239">DNA-directed DNA polymerase</keyword>
<keyword id="KW-0255">Endonuclease</keyword>
<keyword id="KW-0378">Hydrolase</keyword>
<keyword id="KW-0460">Magnesium</keyword>
<keyword id="KW-0479">Metal-binding</keyword>
<keyword id="KW-0511">Multifunctional enzyme</keyword>
<keyword id="KW-0540">Nuclease</keyword>
<keyword id="KW-0547">Nucleotide-binding</keyword>
<keyword id="KW-0548">Nucleotidyltransferase</keyword>
<keyword id="KW-0539">Nucleus</keyword>
<keyword id="KW-0597">Phosphoprotein</keyword>
<keyword id="KW-0645">Protease</keyword>
<keyword id="KW-1185">Reference proteome</keyword>
<keyword id="KW-0688">Ribosomal frameshifting</keyword>
<keyword id="KW-0694">RNA-binding</keyword>
<keyword id="KW-0695">RNA-directed DNA polymerase</keyword>
<keyword id="KW-0808">Transferase</keyword>
<keyword id="KW-0814">Transposable element</keyword>
<keyword id="KW-0815">Transposition</keyword>
<keyword id="KW-1188">Viral release from host cell</keyword>
<keyword id="KW-0917">Virion maturation</keyword>
<keyword id="KW-0862">Zinc</keyword>
<keyword id="KW-0863">Zinc-finger</keyword>
<accession>Q03434</accession>
<accession>D6VZD5</accession>
<comment type="function">
    <text evidence="1">Capsid protein (CA) is the structural component of the virus-like particle (VLP), forming the shell that encapsulates the retrotransposons dimeric RNA genome. The particles are assembled from trimer-clustered units and there are holes in the capsid shells that allow for the diffusion of macromolecules. CA also has nucleocapsid-like chaperone activity, promoting primer tRNA(i)-Met annealing to the multipartite primer-binding site (PBS), dimerization of Ty1 RNA and initiation of reverse transcription (By similarity).</text>
</comment>
<comment type="function">
    <text evidence="1">The aspartyl protease (PR) mediates the proteolytic cleavages of the Gag and Gag-Pol polyproteins after assembly of the VLP.</text>
</comment>
<comment type="function">
    <text evidence="1">Reverse transcriptase/ribonuclease H (RT) is a multifunctional enzyme that catalyzes the conversion of the retro-elements RNA genome into dsDNA within the VLP. The enzyme displays a DNA polymerase activity that can copy either DNA or RNA templates, and a ribonuclease H (RNase H) activity that cleaves the RNA strand of RNA-DNA heteroduplexes during plus-strand synthesis and hydrolyzes RNA primers. The conversion leads to a linear dsDNA copy of the retrotransposon that includes long terminal repeats (LTRs) at both ends (By similarity).</text>
</comment>
<comment type="function">
    <text evidence="1">Integrase (IN) targets the VLP to the nucleus, where a subparticle preintegration complex (PIC) containing at least integrase and the newly synthesized dsDNA copy of the retrotransposon must transit the nuclear membrane. Once in the nucleus, integrase performs the integration of the dsDNA into the host genome (By similarity).</text>
</comment>
<comment type="catalytic activity">
    <reaction>
        <text>DNA(n) + a 2'-deoxyribonucleoside 5'-triphosphate = DNA(n+1) + diphosphate</text>
        <dbReference type="Rhea" id="RHEA:22508"/>
        <dbReference type="Rhea" id="RHEA-COMP:17339"/>
        <dbReference type="Rhea" id="RHEA-COMP:17340"/>
        <dbReference type="ChEBI" id="CHEBI:33019"/>
        <dbReference type="ChEBI" id="CHEBI:61560"/>
        <dbReference type="ChEBI" id="CHEBI:173112"/>
        <dbReference type="EC" id="2.7.7.49"/>
    </reaction>
</comment>
<comment type="catalytic activity">
    <reaction>
        <text>DNA(n) + a 2'-deoxyribonucleoside 5'-triphosphate = DNA(n+1) + diphosphate</text>
        <dbReference type="Rhea" id="RHEA:22508"/>
        <dbReference type="Rhea" id="RHEA-COMP:17339"/>
        <dbReference type="Rhea" id="RHEA-COMP:17340"/>
        <dbReference type="ChEBI" id="CHEBI:33019"/>
        <dbReference type="ChEBI" id="CHEBI:61560"/>
        <dbReference type="ChEBI" id="CHEBI:173112"/>
        <dbReference type="EC" id="2.7.7.7"/>
    </reaction>
</comment>
<comment type="catalytic activity">
    <reaction>
        <text>Endonucleolytic cleavage to 5'-phosphomonoester.</text>
        <dbReference type="EC" id="3.1.26.4"/>
    </reaction>
</comment>
<comment type="subunit">
    <text evidence="1">The capsid protein forms a homotrimer, from which the VLPs are assembled. The protease is a homodimer, whose active site consists of two apposed aspartic acid residues (By similarity).</text>
</comment>
<comment type="subcellular location">
    <subcellularLocation>
        <location>Cytoplasm</location>
    </subcellularLocation>
    <subcellularLocation>
        <location evidence="1">Nucleus</location>
    </subcellularLocation>
</comment>
<comment type="alternative products">
    <event type="ribosomal frameshifting"/>
    <isoform>
        <id>Q03434-1</id>
        <name>Transposon Ty1-ML2 Gag-Pol polyprotein</name>
        <sequence type="displayed"/>
    </isoform>
    <isoform>
        <id>P0CX76-1</id>
        <name>Transposon Ty1-ML2 Gag polyprotein</name>
        <sequence type="external"/>
    </isoform>
    <text evidence="1">The Gag-Pol polyprotein is generated by a +1 ribosomal frameshift. The ratio of Gag:Gag-Pol varies between 20:1 and 5:1 (By similarity).</text>
</comment>
<comment type="domain">
    <text evidence="1">The C-terminal RNA-binding region of CA is sufficient for all its nucleocapsid-like chaperone activities.</text>
</comment>
<comment type="domain">
    <text evidence="1">Integrase core domain contains the D-x(n)-D-x(35)-E motif, named for the phylogenetically conserved glutamic acid and aspartic acid residues and the invariant 35 amino acid spacing between the second and third acidic residues. Each acidic residue of the D,D(35)E motif is independently essential for the 3'-processing and strand transfer activities of purified integrase protein (By similarity).</text>
</comment>
<comment type="PTM">
    <text evidence="1">Initially, virus-like particles (VLPs) are composed of the structural unprocessed proteins Gag and Gag-Pol, and also contain the host initiator methionine tRNA (tRNA(i)-Met) which serves as a primer for minus-strand DNA synthesis, and a dimer of genomic Ty RNA. Processing of the polyproteins occurs within the particle and proceeds by an ordered pathway, called maturation. First, the protease (PR) is released by autocatalytic cleavage of the Gag-Pol polyprotein yielding capsid protein p45 and a Pol-p154 precursor protein. This cleavage is a prerequisite for subsequent processing of Pol-p154 at the remaining sites to release the mature structural and catalytic proteins. Maturation takes place prior to the RT reaction and is required to produce transposition-competent VLPs (By similarity).</text>
</comment>
<comment type="miscellaneous">
    <text>Retrotransposons are mobile genetic entities that are able to replicate via an RNA intermediate and a reverse transcription step. In contrast to retroviruses, retrotransposons are non-infectious, lack an envelope and remain intracellular. Ty1 retrotransposons belong to the copia elements (pseudoviridae).</text>
</comment>
<comment type="miscellaneous">
    <molecule>Isoform Transposon Ty1-ML2 Gag-Pol polyprotein</molecule>
    <text>Produced by +1 ribosomal frameshifting between codon Leu-435 and Gly-436 of the YML040W ORF.</text>
</comment>
<comment type="sequence caution" evidence="6">
    <conflict type="erroneous gene model prediction">
        <sequence resource="EMBL-CDS" id="CAA88330"/>
    </conflict>
</comment>
<protein>
    <recommendedName>
        <fullName>Transposon Ty1-ML2 Gag-Pol polyprotein</fullName>
    </recommendedName>
    <alternativeName>
        <fullName>Gag-Pol-p199</fullName>
    </alternativeName>
    <alternativeName>
        <fullName>TY1A-TY1B</fullName>
    </alternativeName>
    <alternativeName>
        <fullName>Transposon Ty1 TYA-TYB polyprotein</fullName>
    </alternativeName>
    <alternativeName>
        <fullName>p190</fullName>
    </alternativeName>
    <component>
        <recommendedName>
            <fullName>Capsid protein</fullName>
            <shortName>CA</shortName>
        </recommendedName>
        <alternativeName>
            <fullName>Gag-p45</fullName>
        </alternativeName>
        <alternativeName>
            <fullName>p54</fullName>
        </alternativeName>
    </component>
    <component>
        <recommendedName>
            <fullName>Ty1 protease</fullName>
            <shortName>PR</shortName>
            <ecNumber>3.4.23.-</ecNumber>
        </recommendedName>
        <alternativeName>
            <fullName>Pol-p20</fullName>
        </alternativeName>
        <alternativeName>
            <fullName>p23</fullName>
        </alternativeName>
    </component>
    <component>
        <recommendedName>
            <fullName>Integrase</fullName>
            <shortName>IN</shortName>
        </recommendedName>
        <alternativeName>
            <fullName>Pol-p71</fullName>
        </alternativeName>
        <alternativeName>
            <fullName>p84</fullName>
        </alternativeName>
        <alternativeName>
            <fullName>p90</fullName>
        </alternativeName>
    </component>
    <component>
        <recommendedName>
            <fullName>Reverse transcriptase/ribonuclease H</fullName>
            <shortName>RT</shortName>
            <ecNumber>2.7.7.49</ecNumber>
            <ecNumber>2.7.7.7</ecNumber>
            <ecNumber>3.1.26.4</ecNumber>
        </recommendedName>
        <alternativeName>
            <fullName>Pol-p63</fullName>
        </alternativeName>
        <alternativeName>
            <fullName>p60</fullName>
        </alternativeName>
    </component>
</protein>
<evidence type="ECO:0000250" key="1"/>
<evidence type="ECO:0000250" key="2">
    <source>
        <dbReference type="UniProtKB" id="Q99231"/>
    </source>
</evidence>
<evidence type="ECO:0000255" key="3">
    <source>
        <dbReference type="PROSITE-ProRule" id="PRU00457"/>
    </source>
</evidence>
<evidence type="ECO:0000255" key="4">
    <source>
        <dbReference type="PROSITE-ProRule" id="PRU10094"/>
    </source>
</evidence>
<evidence type="ECO:0000256" key="5">
    <source>
        <dbReference type="SAM" id="MobiDB-lite"/>
    </source>
</evidence>
<evidence type="ECO:0000305" key="6"/>
<gene>
    <name type="primary">TY1B-ML2</name>
    <name type="synonym">YMLWTy1-2 POL</name>
    <name type="ordered locus">YML039W</name>
    <name type="ORF">YM8054.04</name>
</gene>
<proteinExistence type="inferred from homology"/>
<feature type="chain" id="PRO_0000199565" description="Transposon Ty1-ML2 Gag-Pol polyprotein">
    <location>
        <begin position="1"/>
        <end position="1755"/>
    </location>
</feature>
<feature type="chain" id="PRO_0000279123" description="Capsid protein" evidence="1">
    <location>
        <begin position="1"/>
        <end position="401"/>
    </location>
</feature>
<feature type="chain" id="PRO_0000279124" description="Ty1 protease" evidence="1">
    <location>
        <begin position="402"/>
        <end position="582"/>
    </location>
</feature>
<feature type="chain" id="PRO_0000279125" description="Integrase" evidence="1">
    <location>
        <begin position="583"/>
        <end position="1217"/>
    </location>
</feature>
<feature type="chain" id="PRO_0000279126" description="Reverse transcriptase/ribonuclease H" evidence="1">
    <location>
        <begin position="1218"/>
        <end position="1755"/>
    </location>
</feature>
<feature type="domain" description="Integrase catalytic" evidence="3">
    <location>
        <begin position="660"/>
        <end position="835"/>
    </location>
</feature>
<feature type="domain" description="Reverse transcriptase Ty1/copia-type">
    <location>
        <begin position="1338"/>
        <end position="1476"/>
    </location>
</feature>
<feature type="domain" description="RNase H Ty1/copia-type">
    <location>
        <begin position="1610"/>
        <end position="1752"/>
    </location>
</feature>
<feature type="region of interest" description="Disordered" evidence="5">
    <location>
        <begin position="1"/>
        <end position="93"/>
    </location>
</feature>
<feature type="region of interest" description="Disordered" evidence="5">
    <location>
        <begin position="126"/>
        <end position="173"/>
    </location>
</feature>
<feature type="region of interest" description="RNA-binding" evidence="1">
    <location>
        <begin position="299"/>
        <end position="401"/>
    </location>
</feature>
<feature type="region of interest" description="Disordered" evidence="5">
    <location>
        <begin position="352"/>
        <end position="421"/>
    </location>
</feature>
<feature type="region of interest" description="Integrase-type zinc finger-like">
    <location>
        <begin position="583"/>
        <end position="640"/>
    </location>
</feature>
<feature type="region of interest" description="Disordered" evidence="5">
    <location>
        <begin position="956"/>
        <end position="1087"/>
    </location>
</feature>
<feature type="region of interest" description="Disordered" evidence="5">
    <location>
        <begin position="1092"/>
        <end position="1111"/>
    </location>
</feature>
<feature type="region of interest" description="Disordered" evidence="5">
    <location>
        <begin position="1130"/>
        <end position="1171"/>
    </location>
</feature>
<feature type="short sequence motif" description="Bipartite nuclear localization signal" evidence="1">
    <location>
        <begin position="1178"/>
        <end position="1212"/>
    </location>
</feature>
<feature type="compositionally biased region" description="Low complexity" evidence="5">
    <location>
        <begin position="1"/>
        <end position="16"/>
    </location>
</feature>
<feature type="compositionally biased region" description="Polar residues" evidence="5">
    <location>
        <begin position="48"/>
        <end position="60"/>
    </location>
</feature>
<feature type="compositionally biased region" description="Polar residues" evidence="5">
    <location>
        <begin position="127"/>
        <end position="152"/>
    </location>
</feature>
<feature type="compositionally biased region" description="Low complexity" evidence="5">
    <location>
        <begin position="153"/>
        <end position="165"/>
    </location>
</feature>
<feature type="compositionally biased region" description="Low complexity" evidence="5">
    <location>
        <begin position="402"/>
        <end position="418"/>
    </location>
</feature>
<feature type="compositionally biased region" description="Low complexity" evidence="5">
    <location>
        <begin position="960"/>
        <end position="969"/>
    </location>
</feature>
<feature type="compositionally biased region" description="Polar residues" evidence="5">
    <location>
        <begin position="1005"/>
        <end position="1015"/>
    </location>
</feature>
<feature type="compositionally biased region" description="Basic and acidic residues" evidence="5">
    <location>
        <begin position="1038"/>
        <end position="1053"/>
    </location>
</feature>
<feature type="compositionally biased region" description="Polar residues" evidence="5">
    <location>
        <begin position="1054"/>
        <end position="1082"/>
    </location>
</feature>
<feature type="compositionally biased region" description="Polar residues" evidence="5">
    <location>
        <begin position="1101"/>
        <end position="1111"/>
    </location>
</feature>
<feature type="active site" description="For protease activity; shared with dimeric partner" evidence="4">
    <location>
        <position position="461"/>
    </location>
</feature>
<feature type="binding site" evidence="3">
    <location>
        <position position="671"/>
    </location>
    <ligand>
        <name>Mg(2+)</name>
        <dbReference type="ChEBI" id="CHEBI:18420"/>
        <label>1</label>
        <note>catalytic; for integrase activity</note>
    </ligand>
</feature>
<feature type="binding site" evidence="3">
    <location>
        <position position="736"/>
    </location>
    <ligand>
        <name>Mg(2+)</name>
        <dbReference type="ChEBI" id="CHEBI:18420"/>
        <label>1</label>
        <note>catalytic; for integrase activity</note>
    </ligand>
</feature>
<feature type="binding site" evidence="3">
    <location>
        <position position="1346"/>
    </location>
    <ligand>
        <name>Mg(2+)</name>
        <dbReference type="ChEBI" id="CHEBI:18420"/>
        <label>2</label>
        <note>catalytic; for reverse transcriptase activity</note>
    </ligand>
</feature>
<feature type="binding site" evidence="3">
    <location>
        <position position="1427"/>
    </location>
    <ligand>
        <name>Mg(2+)</name>
        <dbReference type="ChEBI" id="CHEBI:18420"/>
        <label>2</label>
        <note>catalytic; for reverse transcriptase activity</note>
    </ligand>
</feature>
<feature type="binding site" evidence="3">
    <location>
        <position position="1428"/>
    </location>
    <ligand>
        <name>Mg(2+)</name>
        <dbReference type="ChEBI" id="CHEBI:18420"/>
        <label>2</label>
        <note>catalytic; for reverse transcriptase activity</note>
    </ligand>
</feature>
<feature type="binding site" evidence="3">
    <location>
        <position position="1610"/>
    </location>
    <ligand>
        <name>Mg(2+)</name>
        <dbReference type="ChEBI" id="CHEBI:18420"/>
        <label>3</label>
        <note>catalytic; for RNase H activity</note>
    </ligand>
</feature>
<feature type="binding site" evidence="3">
    <location>
        <position position="1652"/>
    </location>
    <ligand>
        <name>Mg(2+)</name>
        <dbReference type="ChEBI" id="CHEBI:18420"/>
        <label>3</label>
        <note>catalytic; for RNase H activity</note>
    </ligand>
</feature>
<feature type="binding site" evidence="3">
    <location>
        <position position="1685"/>
    </location>
    <ligand>
        <name>Mg(2+)</name>
        <dbReference type="ChEBI" id="CHEBI:18420"/>
        <label>3</label>
        <note>catalytic; for RNase H activity</note>
    </ligand>
</feature>
<feature type="site" description="Cleavage; by Ty1 protease" evidence="1">
    <location>
        <begin position="401"/>
        <end position="402"/>
    </location>
</feature>
<feature type="site" description="Cleavage; by Ty1 protease" evidence="1">
    <location>
        <begin position="582"/>
        <end position="583"/>
    </location>
</feature>
<feature type="site" description="Cleavage; by Ty1 protease" evidence="1">
    <location>
        <begin position="1217"/>
        <end position="1218"/>
    </location>
</feature>
<feature type="modified residue" description="Phosphoserine" evidence="2">
    <location>
        <position position="416"/>
    </location>
</feature>